<keyword id="KW-0029">Amino-acid transport</keyword>
<keyword id="KW-0472">Membrane</keyword>
<keyword id="KW-0496">Mitochondrion</keyword>
<keyword id="KW-0999">Mitochondrion inner membrane</keyword>
<keyword id="KW-1185">Reference proteome</keyword>
<keyword id="KW-0677">Repeat</keyword>
<keyword id="KW-0812">Transmembrane</keyword>
<keyword id="KW-1133">Transmembrane helix</keyword>
<keyword id="KW-0813">Transport</keyword>
<organism>
    <name type="scientific">Bos taurus</name>
    <name type="common">Bovine</name>
    <dbReference type="NCBI Taxonomy" id="9913"/>
    <lineage>
        <taxon>Eukaryota</taxon>
        <taxon>Metazoa</taxon>
        <taxon>Chordata</taxon>
        <taxon>Craniata</taxon>
        <taxon>Vertebrata</taxon>
        <taxon>Euteleostomi</taxon>
        <taxon>Mammalia</taxon>
        <taxon>Eutheria</taxon>
        <taxon>Laurasiatheria</taxon>
        <taxon>Artiodactyla</taxon>
        <taxon>Ruminantia</taxon>
        <taxon>Pecora</taxon>
        <taxon>Bovidae</taxon>
        <taxon>Bovinae</taxon>
        <taxon>Bos</taxon>
    </lineage>
</organism>
<evidence type="ECO:0000250" key="1">
    <source>
        <dbReference type="UniProtKB" id="Q8BL03"/>
    </source>
</evidence>
<evidence type="ECO:0000250" key="2">
    <source>
        <dbReference type="UniProtKB" id="Q8N8R3"/>
    </source>
</evidence>
<evidence type="ECO:0000255" key="3"/>
<evidence type="ECO:0000305" key="4"/>
<accession>Q08DK7</accession>
<comment type="function">
    <text evidence="2">Mitochondrial transporter of arginine, lysine, homoarginine, methylarginine and, to a much lesser extent, ornithine and histidine. Does not transport carnitine nor acylcarnitines. Functions by both counter-exchange and uniport mechanisms. Plays a physiological role in the import of basic amino acids into mitochondria for mitochondrial protein synthesis and amino acid degradation.</text>
</comment>
<comment type="catalytic activity">
    <reaction evidence="2">
        <text>L-lysine(out) + L-arginine(in) = L-lysine(in) + L-arginine(out)</text>
        <dbReference type="Rhea" id="RHEA:70827"/>
        <dbReference type="ChEBI" id="CHEBI:32551"/>
        <dbReference type="ChEBI" id="CHEBI:32682"/>
    </reaction>
</comment>
<comment type="catalytic activity">
    <reaction evidence="2">
        <text>L-histidine(out) + L-arginine(in) = L-histidine(in) + L-arginine(out)</text>
        <dbReference type="Rhea" id="RHEA:71063"/>
        <dbReference type="ChEBI" id="CHEBI:32682"/>
        <dbReference type="ChEBI" id="CHEBI:57595"/>
    </reaction>
</comment>
<comment type="catalytic activity">
    <reaction evidence="2">
        <text>L-ornithine(in) + L-arginine(out) = L-ornithine(out) + L-arginine(in)</text>
        <dbReference type="Rhea" id="RHEA:34991"/>
        <dbReference type="ChEBI" id="CHEBI:32682"/>
        <dbReference type="ChEBI" id="CHEBI:46911"/>
    </reaction>
</comment>
<comment type="catalytic activity">
    <reaction evidence="2">
        <text>L-homoarginine(in) + L-arginine(out) = L-homoarginine(out) + L-arginine(in)</text>
        <dbReference type="Rhea" id="RHEA:72799"/>
        <dbReference type="ChEBI" id="CHEBI:32682"/>
        <dbReference type="ChEBI" id="CHEBI:143006"/>
    </reaction>
</comment>
<comment type="catalytic activity">
    <reaction evidence="2">
        <text>N(omega)-methyl-L-arginine(in) + L-arginine(out) = N(omega)-methyl-L-arginine(out) + L-arginine(in)</text>
        <dbReference type="Rhea" id="RHEA:72803"/>
        <dbReference type="ChEBI" id="CHEBI:32682"/>
        <dbReference type="ChEBI" id="CHEBI:114953"/>
    </reaction>
</comment>
<comment type="catalytic activity">
    <reaction evidence="2">
        <text>L-arginine(in) = L-arginine(out)</text>
        <dbReference type="Rhea" id="RHEA:32143"/>
        <dbReference type="ChEBI" id="CHEBI:32682"/>
    </reaction>
</comment>
<comment type="catalytic activity">
    <reaction evidence="2">
        <text>L-lysine(in) = L-lysine(out)</text>
        <dbReference type="Rhea" id="RHEA:70935"/>
        <dbReference type="ChEBI" id="CHEBI:32551"/>
    </reaction>
</comment>
<comment type="catalytic activity">
    <reaction evidence="2">
        <text>L-ornithine(in) = L-ornithine(out)</text>
        <dbReference type="Rhea" id="RHEA:71199"/>
        <dbReference type="ChEBI" id="CHEBI:46911"/>
    </reaction>
</comment>
<comment type="catalytic activity">
    <reaction evidence="2">
        <text>L-histidine(out) = L-histidine(in)</text>
        <dbReference type="Rhea" id="RHEA:72807"/>
        <dbReference type="ChEBI" id="CHEBI:57595"/>
    </reaction>
</comment>
<comment type="subcellular location">
    <subcellularLocation>
        <location evidence="1">Mitochondrion inner membrane</location>
        <topology evidence="1">Multi-pass membrane protein</topology>
    </subcellularLocation>
</comment>
<comment type="similarity">
    <text evidence="4">Belongs to the mitochondrial carrier (TC 2.A.29) family.</text>
</comment>
<comment type="caution">
    <text evidence="1 2">Initially, this protein was identified as a carnitine/acylcarnitine transporter (By similarity). Later, a study conducted by Palmieri and coworkers demonstrated that SLC25A29 is mainly involved in the translocation of basic amino acids (By similarity).</text>
</comment>
<dbReference type="EMBL" id="BC123695">
    <property type="protein sequence ID" value="AAI23696.1"/>
    <property type="molecule type" value="mRNA"/>
</dbReference>
<dbReference type="RefSeq" id="NP_001071339.1">
    <property type="nucleotide sequence ID" value="NM_001077871.1"/>
</dbReference>
<dbReference type="SMR" id="Q08DK7"/>
<dbReference type="FunCoup" id="Q08DK7">
    <property type="interactions" value="405"/>
</dbReference>
<dbReference type="STRING" id="9913.ENSBTAP00000018163"/>
<dbReference type="PaxDb" id="9913-ENSBTAP00000018163"/>
<dbReference type="Ensembl" id="ENSBTAT00000018163.4">
    <property type="protein sequence ID" value="ENSBTAP00000018163.3"/>
    <property type="gene ID" value="ENSBTAG00000013666.6"/>
</dbReference>
<dbReference type="GeneID" id="507686"/>
<dbReference type="KEGG" id="bta:507686"/>
<dbReference type="CTD" id="123096"/>
<dbReference type="VEuPathDB" id="HostDB:ENSBTAG00000013666"/>
<dbReference type="VGNC" id="VGNC:34755">
    <property type="gene designation" value="SLC25A29"/>
</dbReference>
<dbReference type="eggNOG" id="KOG0762">
    <property type="taxonomic scope" value="Eukaryota"/>
</dbReference>
<dbReference type="GeneTree" id="ENSGT00940000157766"/>
<dbReference type="HOGENOM" id="CLU_015166_16_1_1"/>
<dbReference type="InParanoid" id="Q08DK7"/>
<dbReference type="OMA" id="VYRESGW"/>
<dbReference type="OrthoDB" id="193856at2759"/>
<dbReference type="TreeFam" id="TF351739"/>
<dbReference type="Reactome" id="R-BTA-352230">
    <property type="pathway name" value="Amino acid transport across the plasma membrane"/>
</dbReference>
<dbReference type="Proteomes" id="UP000009136">
    <property type="component" value="Chromosome 21"/>
</dbReference>
<dbReference type="Bgee" id="ENSBTAG00000013666">
    <property type="expression patterns" value="Expressed in parenchyma of mammary gland and 106 other cell types or tissues"/>
</dbReference>
<dbReference type="GO" id="GO:0005743">
    <property type="term" value="C:mitochondrial inner membrane"/>
    <property type="evidence" value="ECO:0007669"/>
    <property type="project" value="UniProtKB-SubCell"/>
</dbReference>
<dbReference type="GO" id="GO:0005739">
    <property type="term" value="C:mitochondrion"/>
    <property type="evidence" value="ECO:0000250"/>
    <property type="project" value="UniProtKB"/>
</dbReference>
<dbReference type="GO" id="GO:0015174">
    <property type="term" value="F:basic amino acid transmembrane transporter activity"/>
    <property type="evidence" value="ECO:0000250"/>
    <property type="project" value="UniProtKB"/>
</dbReference>
<dbReference type="GO" id="GO:0005289">
    <property type="term" value="F:high-affinity L-arginine transmembrane transporter activity"/>
    <property type="evidence" value="ECO:0000250"/>
    <property type="project" value="UniProtKB"/>
</dbReference>
<dbReference type="GO" id="GO:0005292">
    <property type="term" value="F:high-affinity lysine transmembrane transporter activity"/>
    <property type="evidence" value="ECO:0000250"/>
    <property type="project" value="UniProtKB"/>
</dbReference>
<dbReference type="GO" id="GO:1903826">
    <property type="term" value="P:L-arginine transmembrane transport"/>
    <property type="evidence" value="ECO:0000250"/>
    <property type="project" value="UniProtKB"/>
</dbReference>
<dbReference type="GO" id="GO:0089709">
    <property type="term" value="P:L-histidine transmembrane transport"/>
    <property type="evidence" value="ECO:0000250"/>
    <property type="project" value="UniProtKB"/>
</dbReference>
<dbReference type="GO" id="GO:1903401">
    <property type="term" value="P:L-lysine transmembrane transport"/>
    <property type="evidence" value="ECO:0000250"/>
    <property type="project" value="UniProtKB"/>
</dbReference>
<dbReference type="GO" id="GO:1990575">
    <property type="term" value="P:mitochondrial L-ornithine transmembrane transport"/>
    <property type="evidence" value="ECO:0000250"/>
    <property type="project" value="UniProtKB"/>
</dbReference>
<dbReference type="GO" id="GO:0015822">
    <property type="term" value="P:ornithine transport"/>
    <property type="evidence" value="ECO:0000250"/>
    <property type="project" value="UniProtKB"/>
</dbReference>
<dbReference type="FunFam" id="1.50.40.10:FF:000037">
    <property type="entry name" value="Solute carrier family 25 member 29"/>
    <property type="match status" value="1"/>
</dbReference>
<dbReference type="Gene3D" id="1.50.40.10">
    <property type="entry name" value="Mitochondrial carrier domain"/>
    <property type="match status" value="1"/>
</dbReference>
<dbReference type="InterPro" id="IPR002067">
    <property type="entry name" value="Mit_carrier"/>
</dbReference>
<dbReference type="InterPro" id="IPR050567">
    <property type="entry name" value="Mitochondrial_Carrier"/>
</dbReference>
<dbReference type="InterPro" id="IPR018108">
    <property type="entry name" value="Mitochondrial_sb/sol_carrier"/>
</dbReference>
<dbReference type="InterPro" id="IPR023395">
    <property type="entry name" value="Mt_carrier_dom_sf"/>
</dbReference>
<dbReference type="PANTHER" id="PTHR45624:SF61">
    <property type="entry name" value="MITOCHONDRIAL BASIC AMINO ACIDS TRANSPORTER"/>
    <property type="match status" value="1"/>
</dbReference>
<dbReference type="PANTHER" id="PTHR45624">
    <property type="entry name" value="MITOCHONDRIAL BASIC AMINO ACIDS TRANSPORTER-RELATED"/>
    <property type="match status" value="1"/>
</dbReference>
<dbReference type="Pfam" id="PF00153">
    <property type="entry name" value="Mito_carr"/>
    <property type="match status" value="3"/>
</dbReference>
<dbReference type="PRINTS" id="PR00926">
    <property type="entry name" value="MITOCARRIER"/>
</dbReference>
<dbReference type="SUPFAM" id="SSF103506">
    <property type="entry name" value="Mitochondrial carrier"/>
    <property type="match status" value="1"/>
</dbReference>
<dbReference type="PROSITE" id="PS50920">
    <property type="entry name" value="SOLCAR"/>
    <property type="match status" value="3"/>
</dbReference>
<feature type="chain" id="PRO_0000329030" description="Mitochondrial basic amino acids transporter">
    <location>
        <begin position="1"/>
        <end position="298"/>
    </location>
</feature>
<feature type="transmembrane region" description="Helical; Name=1" evidence="3">
    <location>
        <begin position="2"/>
        <end position="22"/>
    </location>
</feature>
<feature type="transmembrane region" description="Helical; Name=2" evidence="3">
    <location>
        <begin position="61"/>
        <end position="81"/>
    </location>
</feature>
<feature type="transmembrane region" description="Helical; Name=3" evidence="3">
    <location>
        <begin position="96"/>
        <end position="116"/>
    </location>
</feature>
<feature type="transmembrane region" description="Helical; Name=4" evidence="3">
    <location>
        <begin position="153"/>
        <end position="172"/>
    </location>
</feature>
<feature type="transmembrane region" description="Helical; Name=5" evidence="3">
    <location>
        <begin position="187"/>
        <end position="207"/>
    </location>
</feature>
<feature type="transmembrane region" description="Helical; Name=6" evidence="3">
    <location>
        <begin position="255"/>
        <end position="275"/>
    </location>
</feature>
<feature type="repeat" description="Solcar 1">
    <location>
        <begin position="2"/>
        <end position="86"/>
    </location>
</feature>
<feature type="repeat" description="Solcar 2">
    <location>
        <begin position="90"/>
        <end position="178"/>
    </location>
</feature>
<feature type="repeat" description="Solcar 3">
    <location>
        <begin position="185"/>
        <end position="275"/>
    </location>
</feature>
<reference key="1">
    <citation type="submission" date="2006-09" db="EMBL/GenBank/DDBJ databases">
        <authorList>
            <consortium name="NIH - Mammalian Gene Collection (MGC) project"/>
        </authorList>
    </citation>
    <scope>NUCLEOTIDE SEQUENCE [LARGE SCALE MRNA]</scope>
    <source>
        <strain>Hereford</strain>
        <tissue>Hippocampus</tissue>
    </source>
</reference>
<protein>
    <recommendedName>
        <fullName>Mitochondrial basic amino acids transporter</fullName>
    </recommendedName>
    <alternativeName>
        <fullName evidence="1">Carnitine/acylcarnitine translocase-like</fullName>
        <shortName evidence="1">CACT-like</shortName>
    </alternativeName>
    <alternativeName>
        <fullName>Mitochondrial carnitine/acylcarnitine carrier protein CACL</fullName>
    </alternativeName>
    <alternativeName>
        <fullName evidence="2">Mitochondrial ornithine transporter 3</fullName>
    </alternativeName>
    <alternativeName>
        <fullName>Solute carrier family 25 member 29</fullName>
    </alternativeName>
</protein>
<name>S2529_BOVIN</name>
<gene>
    <name type="primary">SLC25A29</name>
    <name type="synonym">ORNT3</name>
</gene>
<sequence length="298" mass="31866">MALDFLAGCAGGVAGVLVGHPFDTVKVRLQVQSVEKPQYRGTLHCFQAIIKQESVLGLYRGLGSPLLGLTFINALVFGVQGNTLRALGRDSPLNQFLAGAAAGAIQCVICCPMELAKTRLQLQEAGPARTYRGPLDCLAQIYRQEGLRGVNRGMVSTLLRETPSFGVYFLTYDVLTRALGCEPGDRLLVPKLLLAGGTSGIASWLSTYPVDVVKSRLQADGLQGAPRYRGIVDCVQQSYREEGWRVFTRGLASTLLRAFPVNAATFATVTVVLSYARGEEARLEGDAGSAALAQPSSL</sequence>
<proteinExistence type="evidence at transcript level"/>